<name>COG7_DICDI</name>
<reference key="1">
    <citation type="journal article" date="2005" name="Nature">
        <title>The genome of the social amoeba Dictyostelium discoideum.</title>
        <authorList>
            <person name="Eichinger L."/>
            <person name="Pachebat J.A."/>
            <person name="Gloeckner G."/>
            <person name="Rajandream M.A."/>
            <person name="Sucgang R."/>
            <person name="Berriman M."/>
            <person name="Song J."/>
            <person name="Olsen R."/>
            <person name="Szafranski K."/>
            <person name="Xu Q."/>
            <person name="Tunggal B."/>
            <person name="Kummerfeld S."/>
            <person name="Madera M."/>
            <person name="Konfortov B.A."/>
            <person name="Rivero F."/>
            <person name="Bankier A.T."/>
            <person name="Lehmann R."/>
            <person name="Hamlin N."/>
            <person name="Davies R."/>
            <person name="Gaudet P."/>
            <person name="Fey P."/>
            <person name="Pilcher K."/>
            <person name="Chen G."/>
            <person name="Saunders D."/>
            <person name="Sodergren E.J."/>
            <person name="Davis P."/>
            <person name="Kerhornou A."/>
            <person name="Nie X."/>
            <person name="Hall N."/>
            <person name="Anjard C."/>
            <person name="Hemphill L."/>
            <person name="Bason N."/>
            <person name="Farbrother P."/>
            <person name="Desany B."/>
            <person name="Just E."/>
            <person name="Morio T."/>
            <person name="Rost R."/>
            <person name="Churcher C.M."/>
            <person name="Cooper J."/>
            <person name="Haydock S."/>
            <person name="van Driessche N."/>
            <person name="Cronin A."/>
            <person name="Goodhead I."/>
            <person name="Muzny D.M."/>
            <person name="Mourier T."/>
            <person name="Pain A."/>
            <person name="Lu M."/>
            <person name="Harper D."/>
            <person name="Lindsay R."/>
            <person name="Hauser H."/>
            <person name="James K.D."/>
            <person name="Quiles M."/>
            <person name="Madan Babu M."/>
            <person name="Saito T."/>
            <person name="Buchrieser C."/>
            <person name="Wardroper A."/>
            <person name="Felder M."/>
            <person name="Thangavelu M."/>
            <person name="Johnson D."/>
            <person name="Knights A."/>
            <person name="Loulseged H."/>
            <person name="Mungall K.L."/>
            <person name="Oliver K."/>
            <person name="Price C."/>
            <person name="Quail M.A."/>
            <person name="Urushihara H."/>
            <person name="Hernandez J."/>
            <person name="Rabbinowitsch E."/>
            <person name="Steffen D."/>
            <person name="Sanders M."/>
            <person name="Ma J."/>
            <person name="Kohara Y."/>
            <person name="Sharp S."/>
            <person name="Simmonds M.N."/>
            <person name="Spiegler S."/>
            <person name="Tivey A."/>
            <person name="Sugano S."/>
            <person name="White B."/>
            <person name="Walker D."/>
            <person name="Woodward J.R."/>
            <person name="Winckler T."/>
            <person name="Tanaka Y."/>
            <person name="Shaulsky G."/>
            <person name="Schleicher M."/>
            <person name="Weinstock G.M."/>
            <person name="Rosenthal A."/>
            <person name="Cox E.C."/>
            <person name="Chisholm R.L."/>
            <person name="Gibbs R.A."/>
            <person name="Loomis W.F."/>
            <person name="Platzer M."/>
            <person name="Kay R.R."/>
            <person name="Williams J.G."/>
            <person name="Dear P.H."/>
            <person name="Noegel A.A."/>
            <person name="Barrell B.G."/>
            <person name="Kuspa A."/>
        </authorList>
    </citation>
    <scope>NUCLEOTIDE SEQUENCE [LARGE SCALE GENOMIC DNA]</scope>
    <source>
        <strain>AX4</strain>
    </source>
</reference>
<protein>
    <recommendedName>
        <fullName>Conserved oligomeric Golgi complex subunit 7</fullName>
        <shortName>COG complex subunit 7</shortName>
    </recommendedName>
    <alternativeName>
        <fullName>Component of oligomeric Golgi complex 7</fullName>
    </alternativeName>
</protein>
<organism>
    <name type="scientific">Dictyostelium discoideum</name>
    <name type="common">Social amoeba</name>
    <dbReference type="NCBI Taxonomy" id="44689"/>
    <lineage>
        <taxon>Eukaryota</taxon>
        <taxon>Amoebozoa</taxon>
        <taxon>Evosea</taxon>
        <taxon>Eumycetozoa</taxon>
        <taxon>Dictyostelia</taxon>
        <taxon>Dictyosteliales</taxon>
        <taxon>Dictyosteliaceae</taxon>
        <taxon>Dictyostelium</taxon>
    </lineage>
</organism>
<gene>
    <name type="primary">cog7</name>
    <name type="ORF">DDB_G0286705</name>
</gene>
<comment type="function">
    <text evidence="1">Required for normal Golgi function.</text>
</comment>
<comment type="subunit">
    <text evidence="1">Component of the conserved oligomeric Golgi complex which is composed of eight different subunits and is required for normal Golgi morphology and localization.</text>
</comment>
<comment type="subcellular location">
    <subcellularLocation>
        <location evidence="1">Golgi apparatus membrane</location>
        <topology evidence="1">Peripheral membrane protein</topology>
    </subcellularLocation>
</comment>
<comment type="similarity">
    <text evidence="3">Belongs to the COG7 family.</text>
</comment>
<proteinExistence type="inferred from homology"/>
<feature type="chain" id="PRO_0000341683" description="Conserved oligomeric Golgi complex subunit 7">
    <location>
        <begin position="1"/>
        <end position="996"/>
    </location>
</feature>
<feature type="region of interest" description="Disordered" evidence="2">
    <location>
        <begin position="533"/>
        <end position="571"/>
    </location>
</feature>
<feature type="region of interest" description="Disordered" evidence="2">
    <location>
        <begin position="828"/>
        <end position="867"/>
    </location>
</feature>
<feature type="region of interest" description="Disordered" evidence="2">
    <location>
        <begin position="950"/>
        <end position="974"/>
    </location>
</feature>
<feature type="compositionally biased region" description="Low complexity" evidence="2">
    <location>
        <begin position="557"/>
        <end position="571"/>
    </location>
</feature>
<feature type="compositionally biased region" description="Basic and acidic residues" evidence="2">
    <location>
        <begin position="828"/>
        <end position="844"/>
    </location>
</feature>
<feature type="compositionally biased region" description="Low complexity" evidence="2">
    <location>
        <begin position="849"/>
        <end position="858"/>
    </location>
</feature>
<feature type="compositionally biased region" description="Low complexity" evidence="2">
    <location>
        <begin position="953"/>
        <end position="974"/>
    </location>
</feature>
<sequence>MINNELKDIFSSNDFNSKTWINNLLSDCGGSGSSSGNAKSNQQSILTDQNNIKAELEIENICSNYLSKLQLYQIELNISLESITSESLLIVPKSIREVDRIRKESLHLKNRIKSISSKIGEMNNDSPQSMETVSVIEKLDQVKSRMEISIRSLKEAEKLLSFSKTVDQLFSSNDYLMISDKLEEVKQSLSVLSDVPEFREQSKKFNVYQDRLESQLKQPLQQSLQQKDLESCKNYLKIFTNIQRQDKFFIYYYQVRIDPLKLLWNSYSSSSSSSSSSSNFHNWLSKFYDEVLVMINSEFNWLSGLCPIDYIQVLENLIIHLFTTINPNVQSRIDQAITIANQTTQQPIKVNELLSIYKTTCSFLKSLSPIFPNIINSSSTPTTSPAVDKLFKVIFEPYKYFQNKFSEYEIKSVKSQLQSISPILTLQKKSGGGSGGSGNADFTNIIKNIENQFIPKSFQIAQQSIERFFDFTHTTDIDSYVNTVLNQIFTEISLILRDTINELKFITGLTTNYIIGSSGTFPNFNQQQQQINTPSSINGEVDPVKKLTNSHTRSHSRSGSGSGNSNSNSVGTSATLQNWEYFQGAMNLLQSIHQLLNKFQQFDNSTSLNIIHYLGNSNNSNNSSSNNDNDQFICNIRKFLLGKDLNKIQKLQISVQNLENIISSPLPLSSSSSVSKDQSISKKPLLLQESFNQISKLLSISQHFVYETLIYFIKLKLKELPKIVSNEWNNNNNNNNNPSQNNGGGGGGGLSYISQITDHLLTIPQQLDPYSEEELTRFSLSTSLQYPIKTCSNSEDDFYQNLLIQYQREKQFDDEQLLIEKLKEKQEQQQEQQEKEQQQEKEQQDADQDININTNNNNENDENDEDDELEDGIAHQWITIVAKATEKLYLQTIVEIITLNEPSCQQLSNDIGYLFNVLSALGVSAEPLLQKTQSLLEMNRDTFTSFYHQQLHNNNNNNNNNNGNSNNNNNNTNNISLLTNAEKNICNLIGKMRNIK</sequence>
<accession>Q54LC8</accession>
<dbReference type="EMBL" id="AAFI02000089">
    <property type="protein sequence ID" value="EAL64108.1"/>
    <property type="molecule type" value="Genomic_DNA"/>
</dbReference>
<dbReference type="RefSeq" id="XP_637633.1">
    <property type="nucleotide sequence ID" value="XM_632541.1"/>
</dbReference>
<dbReference type="SMR" id="Q54LC8"/>
<dbReference type="FunCoup" id="Q54LC8">
    <property type="interactions" value="104"/>
</dbReference>
<dbReference type="STRING" id="44689.Q54LC8"/>
<dbReference type="PaxDb" id="44689-DDB0237953"/>
<dbReference type="EnsemblProtists" id="EAL64108">
    <property type="protein sequence ID" value="EAL64108"/>
    <property type="gene ID" value="DDB_G0286705"/>
</dbReference>
<dbReference type="GeneID" id="8625774"/>
<dbReference type="KEGG" id="ddi:DDB_G0286705"/>
<dbReference type="dictyBase" id="DDB_G0286705">
    <property type="gene designation" value="cog7"/>
</dbReference>
<dbReference type="VEuPathDB" id="AmoebaDB:DDB_G0286705"/>
<dbReference type="eggNOG" id="KOG4182">
    <property type="taxonomic scope" value="Eukaryota"/>
</dbReference>
<dbReference type="HOGENOM" id="CLU_300625_0_0_1"/>
<dbReference type="InParanoid" id="Q54LC8"/>
<dbReference type="OMA" id="LKYYHNC"/>
<dbReference type="Reactome" id="R-DDI-6807878">
    <property type="pathway name" value="COPI-mediated anterograde transport"/>
</dbReference>
<dbReference type="Reactome" id="R-DDI-6811438">
    <property type="pathway name" value="Intra-Golgi traffic"/>
</dbReference>
<dbReference type="PRO" id="PR:Q54LC8"/>
<dbReference type="Proteomes" id="UP000002195">
    <property type="component" value="Chromosome 4"/>
</dbReference>
<dbReference type="GO" id="GO:0000139">
    <property type="term" value="C:Golgi membrane"/>
    <property type="evidence" value="ECO:0007669"/>
    <property type="project" value="UniProtKB-SubCell"/>
</dbReference>
<dbReference type="GO" id="GO:0017119">
    <property type="term" value="C:Golgi transport complex"/>
    <property type="evidence" value="ECO:0000318"/>
    <property type="project" value="GO_Central"/>
</dbReference>
<dbReference type="GO" id="GO:0007030">
    <property type="term" value="P:Golgi organization"/>
    <property type="evidence" value="ECO:0000318"/>
    <property type="project" value="GO_Central"/>
</dbReference>
<dbReference type="GO" id="GO:0006886">
    <property type="term" value="P:intracellular protein transport"/>
    <property type="evidence" value="ECO:0007669"/>
    <property type="project" value="InterPro"/>
</dbReference>
<dbReference type="GO" id="GO:0006890">
    <property type="term" value="P:retrograde vesicle-mediated transport, Golgi to endoplasmic reticulum"/>
    <property type="evidence" value="ECO:0000318"/>
    <property type="project" value="GO_Central"/>
</dbReference>
<dbReference type="InterPro" id="IPR019335">
    <property type="entry name" value="COG7"/>
</dbReference>
<dbReference type="PANTHER" id="PTHR21443">
    <property type="entry name" value="CONSERVED OLIGOMERIC GOLGI COMPLEX COMPONENT 7"/>
    <property type="match status" value="1"/>
</dbReference>
<dbReference type="PANTHER" id="PTHR21443:SF0">
    <property type="entry name" value="CONSERVED OLIGOMERIC GOLGI COMPLEX SUBUNIT 7"/>
    <property type="match status" value="1"/>
</dbReference>
<dbReference type="Pfam" id="PF10191">
    <property type="entry name" value="COG7"/>
    <property type="match status" value="2"/>
</dbReference>
<keyword id="KW-0333">Golgi apparatus</keyword>
<keyword id="KW-0472">Membrane</keyword>
<keyword id="KW-0653">Protein transport</keyword>
<keyword id="KW-1185">Reference proteome</keyword>
<keyword id="KW-0813">Transport</keyword>
<evidence type="ECO:0000250" key="1">
    <source>
        <dbReference type="UniProtKB" id="P83436"/>
    </source>
</evidence>
<evidence type="ECO:0000256" key="2">
    <source>
        <dbReference type="SAM" id="MobiDB-lite"/>
    </source>
</evidence>
<evidence type="ECO:0000305" key="3"/>